<comment type="function">
    <text evidence="1">eIF-2 functions in the early steps of protein synthesis by forming a ternary complex with GTP and initiator tRNA.</text>
</comment>
<comment type="catalytic activity">
    <reaction evidence="1">
        <text>GTP + H2O = GDP + phosphate + H(+)</text>
        <dbReference type="Rhea" id="RHEA:19669"/>
        <dbReference type="ChEBI" id="CHEBI:15377"/>
        <dbReference type="ChEBI" id="CHEBI:15378"/>
        <dbReference type="ChEBI" id="CHEBI:37565"/>
        <dbReference type="ChEBI" id="CHEBI:43474"/>
        <dbReference type="ChEBI" id="CHEBI:58189"/>
        <dbReference type="EC" id="3.6.5.3"/>
    </reaction>
</comment>
<comment type="cofactor">
    <cofactor evidence="1">
        <name>Mg(2+)</name>
        <dbReference type="ChEBI" id="CHEBI:18420"/>
    </cofactor>
</comment>
<comment type="subunit">
    <text evidence="1">Heterotrimer composed of an alpha, a beta and a gamma chain.</text>
</comment>
<comment type="similarity">
    <text evidence="1">Belongs to the TRAFAC class translation factor GTPase superfamily. Classic translation factor GTPase family. EIF2G subfamily.</text>
</comment>
<gene>
    <name evidence="1" type="primary">eif2g</name>
    <name type="ordered locus">MM_0594</name>
</gene>
<name>IF2G_METMA</name>
<dbReference type="EC" id="3.6.5.3" evidence="1"/>
<dbReference type="EMBL" id="AE008384">
    <property type="protein sequence ID" value="AAM30290.1"/>
    <property type="molecule type" value="Genomic_DNA"/>
</dbReference>
<dbReference type="SMR" id="Q8PZA0"/>
<dbReference type="KEGG" id="mma:MM_0594"/>
<dbReference type="PATRIC" id="fig|192952.21.peg.700"/>
<dbReference type="eggNOG" id="arCOG01563">
    <property type="taxonomic scope" value="Archaea"/>
</dbReference>
<dbReference type="HOGENOM" id="CLU_027154_0_1_2"/>
<dbReference type="Proteomes" id="UP000000595">
    <property type="component" value="Chromosome"/>
</dbReference>
<dbReference type="GO" id="GO:0005829">
    <property type="term" value="C:cytosol"/>
    <property type="evidence" value="ECO:0007669"/>
    <property type="project" value="TreeGrafter"/>
</dbReference>
<dbReference type="GO" id="GO:0005525">
    <property type="term" value="F:GTP binding"/>
    <property type="evidence" value="ECO:0007669"/>
    <property type="project" value="UniProtKB-UniRule"/>
</dbReference>
<dbReference type="GO" id="GO:0003924">
    <property type="term" value="F:GTPase activity"/>
    <property type="evidence" value="ECO:0007669"/>
    <property type="project" value="InterPro"/>
</dbReference>
<dbReference type="GO" id="GO:0046872">
    <property type="term" value="F:metal ion binding"/>
    <property type="evidence" value="ECO:0007669"/>
    <property type="project" value="UniProtKB-KW"/>
</dbReference>
<dbReference type="GO" id="GO:0003746">
    <property type="term" value="F:translation elongation factor activity"/>
    <property type="evidence" value="ECO:0007669"/>
    <property type="project" value="UniProtKB-UniRule"/>
</dbReference>
<dbReference type="GO" id="GO:0003743">
    <property type="term" value="F:translation initiation factor activity"/>
    <property type="evidence" value="ECO:0007669"/>
    <property type="project" value="UniProtKB-KW"/>
</dbReference>
<dbReference type="GO" id="GO:0000049">
    <property type="term" value="F:tRNA binding"/>
    <property type="evidence" value="ECO:0007669"/>
    <property type="project" value="InterPro"/>
</dbReference>
<dbReference type="GO" id="GO:0001731">
    <property type="term" value="P:formation of translation preinitiation complex"/>
    <property type="evidence" value="ECO:0007669"/>
    <property type="project" value="TreeGrafter"/>
</dbReference>
<dbReference type="CDD" id="cd01888">
    <property type="entry name" value="eIF2_gamma"/>
    <property type="match status" value="1"/>
</dbReference>
<dbReference type="CDD" id="cd03688">
    <property type="entry name" value="eIF2_gamma_II"/>
    <property type="match status" value="1"/>
</dbReference>
<dbReference type="CDD" id="cd15490">
    <property type="entry name" value="eIF2_gamma_III"/>
    <property type="match status" value="1"/>
</dbReference>
<dbReference type="FunFam" id="2.40.30.10:FF:000009">
    <property type="entry name" value="Eukaryotic translation initiation factor 2 subunit gamma"/>
    <property type="match status" value="1"/>
</dbReference>
<dbReference type="FunFam" id="3.40.50.300:FF:000065">
    <property type="entry name" value="Eukaryotic translation initiation factor 2 subunit gamma"/>
    <property type="match status" value="1"/>
</dbReference>
<dbReference type="FunFam" id="2.40.30.10:FF:000075">
    <property type="entry name" value="Translation initiation factor 2 subunit gamma"/>
    <property type="match status" value="1"/>
</dbReference>
<dbReference type="Gene3D" id="3.40.50.300">
    <property type="entry name" value="P-loop containing nucleotide triphosphate hydrolases"/>
    <property type="match status" value="1"/>
</dbReference>
<dbReference type="Gene3D" id="2.40.30.10">
    <property type="entry name" value="Translation factors"/>
    <property type="match status" value="2"/>
</dbReference>
<dbReference type="HAMAP" id="MF_00119">
    <property type="entry name" value="eIF_2_gamma"/>
    <property type="match status" value="1"/>
</dbReference>
<dbReference type="InterPro" id="IPR050543">
    <property type="entry name" value="eIF2G"/>
</dbReference>
<dbReference type="InterPro" id="IPR015256">
    <property type="entry name" value="eIF2g_C"/>
</dbReference>
<dbReference type="InterPro" id="IPR044127">
    <property type="entry name" value="eIF2g_dom_2"/>
</dbReference>
<dbReference type="InterPro" id="IPR044128">
    <property type="entry name" value="eIF2g_GTP-bd"/>
</dbReference>
<dbReference type="InterPro" id="IPR027417">
    <property type="entry name" value="P-loop_NTPase"/>
</dbReference>
<dbReference type="InterPro" id="IPR005225">
    <property type="entry name" value="Small_GTP-bd"/>
</dbReference>
<dbReference type="InterPro" id="IPR000795">
    <property type="entry name" value="T_Tr_GTP-bd_dom"/>
</dbReference>
<dbReference type="InterPro" id="IPR022424">
    <property type="entry name" value="TIF2_gsu"/>
</dbReference>
<dbReference type="InterPro" id="IPR009000">
    <property type="entry name" value="Transl_B-barrel_sf"/>
</dbReference>
<dbReference type="InterPro" id="IPR009001">
    <property type="entry name" value="Transl_elong_EF1A/Init_IF2_C"/>
</dbReference>
<dbReference type="NCBIfam" id="TIGR03680">
    <property type="entry name" value="eif2g_arch"/>
    <property type="match status" value="1"/>
</dbReference>
<dbReference type="NCBIfam" id="NF003077">
    <property type="entry name" value="PRK04000.1"/>
    <property type="match status" value="1"/>
</dbReference>
<dbReference type="NCBIfam" id="TIGR00231">
    <property type="entry name" value="small_GTP"/>
    <property type="match status" value="1"/>
</dbReference>
<dbReference type="PANTHER" id="PTHR42854">
    <property type="entry name" value="EUKARYOTIC TRANSLATION INITIATION FACTOR 2 SUBUNIT 3 FAMILY MEMBER"/>
    <property type="match status" value="1"/>
</dbReference>
<dbReference type="PANTHER" id="PTHR42854:SF3">
    <property type="entry name" value="EUKARYOTIC TRANSLATION INITIATION FACTOR 2 SUBUNIT 3-RELATED"/>
    <property type="match status" value="1"/>
</dbReference>
<dbReference type="Pfam" id="PF09173">
    <property type="entry name" value="eIF2_C"/>
    <property type="match status" value="1"/>
</dbReference>
<dbReference type="Pfam" id="PF00009">
    <property type="entry name" value="GTP_EFTU"/>
    <property type="match status" value="1"/>
</dbReference>
<dbReference type="PRINTS" id="PR00315">
    <property type="entry name" value="ELONGATNFCT"/>
</dbReference>
<dbReference type="SUPFAM" id="SSF50465">
    <property type="entry name" value="EF-Tu/eEF-1alpha/eIF2-gamma C-terminal domain"/>
    <property type="match status" value="1"/>
</dbReference>
<dbReference type="SUPFAM" id="SSF52540">
    <property type="entry name" value="P-loop containing nucleoside triphosphate hydrolases"/>
    <property type="match status" value="1"/>
</dbReference>
<dbReference type="SUPFAM" id="SSF50447">
    <property type="entry name" value="Translation proteins"/>
    <property type="match status" value="1"/>
</dbReference>
<dbReference type="PROSITE" id="PS51722">
    <property type="entry name" value="G_TR_2"/>
    <property type="match status" value="1"/>
</dbReference>
<feature type="chain" id="PRO_0000137456" description="Translation initiation factor 2 subunit gamma">
    <location>
        <begin position="1"/>
        <end position="431"/>
    </location>
</feature>
<feature type="domain" description="tr-type G" evidence="1">
    <location>
        <begin position="26"/>
        <end position="223"/>
    </location>
</feature>
<feature type="region of interest" description="G1" evidence="1">
    <location>
        <begin position="35"/>
        <end position="42"/>
    </location>
</feature>
<feature type="region of interest" description="G2" evidence="1">
    <location>
        <begin position="63"/>
        <end position="67"/>
    </location>
</feature>
<feature type="region of interest" description="G3" evidence="1">
    <location>
        <begin position="110"/>
        <end position="113"/>
    </location>
</feature>
<feature type="region of interest" description="G4" evidence="1">
    <location>
        <begin position="166"/>
        <end position="169"/>
    </location>
</feature>
<feature type="region of interest" description="G5" evidence="1">
    <location>
        <begin position="201"/>
        <end position="203"/>
    </location>
</feature>
<feature type="binding site" evidence="1">
    <location>
        <begin position="38"/>
        <end position="43"/>
    </location>
    <ligand>
        <name>GTP</name>
        <dbReference type="ChEBI" id="CHEBI:37565"/>
    </ligand>
</feature>
<feature type="binding site" evidence="1">
    <location>
        <position position="38"/>
    </location>
    <ligand>
        <name>Mg(2+)</name>
        <dbReference type="ChEBI" id="CHEBI:18420"/>
        <label>2</label>
    </ligand>
</feature>
<feature type="binding site" evidence="1">
    <location>
        <position position="42"/>
    </location>
    <ligand>
        <name>Mg(2+)</name>
        <dbReference type="ChEBI" id="CHEBI:18420"/>
        <label>1</label>
    </ligand>
</feature>
<feature type="binding site" evidence="1">
    <location>
        <position position="63"/>
    </location>
    <ligand>
        <name>Mg(2+)</name>
        <dbReference type="ChEBI" id="CHEBI:18420"/>
        <label>2</label>
    </ligand>
</feature>
<feature type="binding site" evidence="1">
    <location>
        <position position="65"/>
    </location>
    <ligand>
        <name>Mg(2+)</name>
        <dbReference type="ChEBI" id="CHEBI:18420"/>
        <label>1</label>
    </ligand>
</feature>
<feature type="binding site" evidence="1">
    <location>
        <position position="78"/>
    </location>
    <ligand>
        <name>Zn(2+)</name>
        <dbReference type="ChEBI" id="CHEBI:29105"/>
    </ligand>
</feature>
<feature type="binding site" evidence="1">
    <location>
        <position position="81"/>
    </location>
    <ligand>
        <name>Zn(2+)</name>
        <dbReference type="ChEBI" id="CHEBI:29105"/>
    </ligand>
</feature>
<feature type="binding site" evidence="1">
    <location>
        <position position="93"/>
    </location>
    <ligand>
        <name>Zn(2+)</name>
        <dbReference type="ChEBI" id="CHEBI:29105"/>
    </ligand>
</feature>
<feature type="binding site" evidence="1">
    <location>
        <position position="96"/>
    </location>
    <ligand>
        <name>Zn(2+)</name>
        <dbReference type="ChEBI" id="CHEBI:29105"/>
    </ligand>
</feature>
<feature type="binding site" evidence="1">
    <location>
        <begin position="166"/>
        <end position="169"/>
    </location>
    <ligand>
        <name>GTP</name>
        <dbReference type="ChEBI" id="CHEBI:37565"/>
    </ligand>
</feature>
<feature type="binding site" evidence="1">
    <location>
        <begin position="201"/>
        <end position="203"/>
    </location>
    <ligand>
        <name>GTP</name>
        <dbReference type="ChEBI" id="CHEBI:37565"/>
    </ligand>
</feature>
<sequence>MHRFRKNTCLISDYFHSTGGNYNLSQPCVNIGMVGHVDHGKTTLVRALSGVWTDTHSEEVKRGISIRLGYADSPFMKCPKCPEPQCYTVEKTCPNCGEKTEEHRTVSFVDAPGHETLMATMLSGAAIMDGAVLVIAANEDCPQPQTKEHLMALDIIGIKNIVIVQNKIDLVSREKIIENYHQIKEFVKGTVAENAPVIPISAQQNINIDILIDALETQIPTPSHKVDKPASMLIARSFDINKPGASIEEIRGGVIGGTLTEGVLHPGDELEIRPGIKVTTEGSTRWIPILTTVSSIYAGATKVDEATPGGLLAVGTYLDPTLTKGDSLTGQMAGVPGTLPETRHQFVMELHLLDRVVGVTREEKINEIKTSEPLMLNIGTATTVGVVTSARKNEAQVALKRPISAAIGAMVAISRRVDSRWRLIGVGVIKS</sequence>
<accession>Q8PZA0</accession>
<organism>
    <name type="scientific">Methanosarcina mazei (strain ATCC BAA-159 / DSM 3647 / Goe1 / Go1 / JCM 11833 / OCM 88)</name>
    <name type="common">Methanosarcina frisia</name>
    <dbReference type="NCBI Taxonomy" id="192952"/>
    <lineage>
        <taxon>Archaea</taxon>
        <taxon>Methanobacteriati</taxon>
        <taxon>Methanobacteriota</taxon>
        <taxon>Stenosarchaea group</taxon>
        <taxon>Methanomicrobia</taxon>
        <taxon>Methanosarcinales</taxon>
        <taxon>Methanosarcinaceae</taxon>
        <taxon>Methanosarcina</taxon>
    </lineage>
</organism>
<protein>
    <recommendedName>
        <fullName evidence="1">Translation initiation factor 2 subunit gamma</fullName>
        <ecNumber evidence="1">3.6.5.3</ecNumber>
    </recommendedName>
    <alternativeName>
        <fullName evidence="1">aIF2-gamma</fullName>
    </alternativeName>
    <alternativeName>
        <fullName evidence="1">eIF-2-gamma</fullName>
    </alternativeName>
</protein>
<reference key="1">
    <citation type="journal article" date="2002" name="J. Mol. Microbiol. Biotechnol.">
        <title>The genome of Methanosarcina mazei: evidence for lateral gene transfer between Bacteria and Archaea.</title>
        <authorList>
            <person name="Deppenmeier U."/>
            <person name="Johann A."/>
            <person name="Hartsch T."/>
            <person name="Merkl R."/>
            <person name="Schmitz R.A."/>
            <person name="Martinez-Arias R."/>
            <person name="Henne A."/>
            <person name="Wiezer A."/>
            <person name="Baeumer S."/>
            <person name="Jacobi C."/>
            <person name="Brueggemann H."/>
            <person name="Lienard T."/>
            <person name="Christmann A."/>
            <person name="Boemecke M."/>
            <person name="Steckel S."/>
            <person name="Bhattacharyya A."/>
            <person name="Lykidis A."/>
            <person name="Overbeek R."/>
            <person name="Klenk H.-P."/>
            <person name="Gunsalus R.P."/>
            <person name="Fritz H.-J."/>
            <person name="Gottschalk G."/>
        </authorList>
    </citation>
    <scope>NUCLEOTIDE SEQUENCE [LARGE SCALE GENOMIC DNA]</scope>
    <source>
        <strain>ATCC BAA-159 / DSM 3647 / Goe1 / Go1 / JCM 11833 / OCM 88</strain>
    </source>
</reference>
<proteinExistence type="inferred from homology"/>
<evidence type="ECO:0000255" key="1">
    <source>
        <dbReference type="HAMAP-Rule" id="MF_00119"/>
    </source>
</evidence>
<keyword id="KW-0342">GTP-binding</keyword>
<keyword id="KW-0378">Hydrolase</keyword>
<keyword id="KW-0396">Initiation factor</keyword>
<keyword id="KW-0460">Magnesium</keyword>
<keyword id="KW-0479">Metal-binding</keyword>
<keyword id="KW-0547">Nucleotide-binding</keyword>
<keyword id="KW-0648">Protein biosynthesis</keyword>
<keyword id="KW-0862">Zinc</keyword>